<organism>
    <name type="scientific">Homo sapiens</name>
    <name type="common">Human</name>
    <dbReference type="NCBI Taxonomy" id="9606"/>
    <lineage>
        <taxon>Eukaryota</taxon>
        <taxon>Metazoa</taxon>
        <taxon>Chordata</taxon>
        <taxon>Craniata</taxon>
        <taxon>Vertebrata</taxon>
        <taxon>Euteleostomi</taxon>
        <taxon>Mammalia</taxon>
        <taxon>Eutheria</taxon>
        <taxon>Euarchontoglires</taxon>
        <taxon>Primates</taxon>
        <taxon>Haplorrhini</taxon>
        <taxon>Catarrhini</taxon>
        <taxon>Hominidae</taxon>
        <taxon>Homo</taxon>
    </lineage>
</organism>
<name>DR9C7_HUMAN</name>
<keyword id="KW-0963">Cytoplasm</keyword>
<keyword id="KW-0225">Disease variant</keyword>
<keyword id="KW-0977">Ichthyosis</keyword>
<keyword id="KW-0521">NADP</keyword>
<keyword id="KW-0560">Oxidoreductase</keyword>
<keyword id="KW-0597">Phosphoprotein</keyword>
<keyword id="KW-1267">Proteomics identification</keyword>
<keyword id="KW-1185">Reference proteome</keyword>
<sequence length="313" mass="35263">MAALTDLSFMYRWFKNCNLVGNLSEKYVFITGCDSGFGNLLAKQLVDRGMQVLAACFTEEGSQKLQRDTSYRLQTTLLDVTKSESIKAAAQWVRDKVGEQGLWALVNNAGVGLPSGPNEWLTKDDFVKVINVNLVGLIEVTLHMLPMVKRARGRVVNMSSSGGRVAVIGGGYCVSKFGVEAFSDSIRRELYYFGVKVCIIEPGNYRTAILGKENLESRMRKLWERLPQETRDSYGEDYFRIYTDKLKNIMQVAEPRVRDVINSMEHAIVSRSPRIRYNPGLDAKLLYIPLAKLPTPVTDFILSRYLPRPADSV</sequence>
<comment type="function">
    <text evidence="4 6">Plays a crucial role in the formation of the epidermal permeability barrier (PubMed:31671075). Catalyzes the NAD+-dependent dehydrogenation of the linoleate 9,10-trans-epoxy-11E-13-alcohol esterified in omega-O-acylceramides (such as in N-[omega-(9R,10R)-epoxy-(13R)-hydroxy-(11E)-octadecenoyloxy]-acylsphing-4E-enine) to the corresponding 13-ketone, the reactive moiety required for binding of epidermal ceramides to proteins (PubMed:31671075). Displays weak conversion of all-trans-retinal to all-trans-retinol in the presence of NADH. Has apparently no steroid dehydrogenase activity (PubMed:19703561).</text>
</comment>
<comment type="catalytic activity">
    <reaction evidence="6">
        <text>a N-[omega-(9R,10R)-epoxy-(13R)-hydroxy-(11E)-octadecenoyloxy]acyl-beta-D-glucosyl-(1&lt;-&gt;1)-sphing-4E-enine + NAD(+) = a N-[omega-(9R,10R)-epoxy-13-oxo-(11E)-octadecenoyloxy]acyl-beta-D-glucosyl-(1&lt;-&gt;1)-sphing-4E-enine + NADH + H(+)</text>
        <dbReference type="Rhea" id="RHEA:82447"/>
        <dbReference type="ChEBI" id="CHEBI:15378"/>
        <dbReference type="ChEBI" id="CHEBI:57540"/>
        <dbReference type="ChEBI" id="CHEBI:57945"/>
        <dbReference type="ChEBI" id="CHEBI:134626"/>
        <dbReference type="ChEBI" id="CHEBI:232325"/>
    </reaction>
    <physiologicalReaction direction="left-to-right" evidence="9">
        <dbReference type="Rhea" id="RHEA:82448"/>
    </physiologicalReaction>
</comment>
<comment type="catalytic activity">
    <reaction evidence="6">
        <text>a N-[omega-(9R,10R)-epoxy-(13R)-hydroxy-(11E)-octadecenoyloxy]-acylsphing-4E-enine + NAD(+) = a N-[omega-(9R,10R)-epoxy-13-oxo-(11E)-octadecenoyloxy]-acylsphing-4E-enine + NADH + H(+)</text>
        <dbReference type="Rhea" id="RHEA:82471"/>
        <dbReference type="ChEBI" id="CHEBI:15378"/>
        <dbReference type="ChEBI" id="CHEBI:57540"/>
        <dbReference type="ChEBI" id="CHEBI:57945"/>
        <dbReference type="ChEBI" id="CHEBI:77891"/>
        <dbReference type="ChEBI" id="CHEBI:77892"/>
    </reaction>
    <physiologicalReaction direction="left-to-right" evidence="9">
        <dbReference type="Rhea" id="RHEA:82472"/>
    </physiologicalReaction>
</comment>
<comment type="subcellular location">
    <subcellularLocation>
        <location evidence="4">Cytoplasm</location>
    </subcellularLocation>
    <text>Granular distribution in the whole cell.</text>
</comment>
<comment type="tissue specificity">
    <text evidence="3">Expressed in the skin (PubMed:28173123). Expressed in granular and cornified layers of the epidermis (at protein level) (PubMed:28173123). Highly expressed in liver (PubMed:12234675).</text>
</comment>
<comment type="disease" evidence="5">
    <disease id="DI-05041">
        <name>Ichthyosis, congenital, autosomal recessive 13</name>
        <acronym>ARCI13</acronym>
        <description>A form of autosomal recessive congenital ichthyosis, a disorder of keratinization with abnormal differentiation and desquamation of the epidermis, resulting in abnormal skin scaling over the whole body. The main skin phenotypes are lamellar ichthyosis (LI) and non-bullous congenital ichthyosiform erythroderma (NCIE), although phenotypic overlap within the same patient or among patients from the same family can occur. Lamellar ichthyosis is a condition often associated with an embedment in a collodion-like membrane at birth; skin scales later develop, covering the entire body surface. Non-bullous congenital ichthyosiform erythroderma characterized by fine whitish scaling on an erythrodermal background; larger brownish scales are present on the buttocks, neck and legs.</description>
        <dbReference type="MIM" id="617574"/>
    </disease>
    <text>The disease is caused by variants affecting the gene represented in this entry.</text>
</comment>
<comment type="similarity">
    <text evidence="8">Belongs to the short-chain dehydrogenases/reductases (SDR) family.</text>
</comment>
<evidence type="ECO:0000250" key="1"/>
<evidence type="ECO:0000255" key="2">
    <source>
        <dbReference type="PROSITE-ProRule" id="PRU10001"/>
    </source>
</evidence>
<evidence type="ECO:0000269" key="3">
    <source>
    </source>
</evidence>
<evidence type="ECO:0000269" key="4">
    <source>
    </source>
</evidence>
<evidence type="ECO:0000269" key="5">
    <source>
    </source>
</evidence>
<evidence type="ECO:0000269" key="6">
    <source>
    </source>
</evidence>
<evidence type="ECO:0000303" key="7">
    <source>
    </source>
</evidence>
<evidence type="ECO:0000305" key="8"/>
<evidence type="ECO:0000305" key="9">
    <source>
    </source>
</evidence>
<evidence type="ECO:0007744" key="10">
    <source>
    </source>
</evidence>
<accession>Q8NEX9</accession>
<accession>B3KVB4</accession>
<reference key="1">
    <citation type="journal article" date="2002" name="Gene">
        <title>SDR-O: an orphan short-chain dehydrogenase/reductase localized at mouse chromosome 10/human chromosome 12.</title>
        <authorList>
            <person name="Chen W."/>
            <person name="Song M.-S."/>
            <person name="Napoli J.L."/>
        </authorList>
    </citation>
    <scope>NUCLEOTIDE SEQUENCE [MRNA]</scope>
    <scope>TISSUE SPECIFICITY</scope>
    <source>
        <tissue>Fetal liver</tissue>
    </source>
</reference>
<reference key="2">
    <citation type="journal article" date="2004" name="Nat. Genet.">
        <title>Complete sequencing and characterization of 21,243 full-length human cDNAs.</title>
        <authorList>
            <person name="Ota T."/>
            <person name="Suzuki Y."/>
            <person name="Nishikawa T."/>
            <person name="Otsuki T."/>
            <person name="Sugiyama T."/>
            <person name="Irie R."/>
            <person name="Wakamatsu A."/>
            <person name="Hayashi K."/>
            <person name="Sato H."/>
            <person name="Nagai K."/>
            <person name="Kimura K."/>
            <person name="Makita H."/>
            <person name="Sekine M."/>
            <person name="Obayashi M."/>
            <person name="Nishi T."/>
            <person name="Shibahara T."/>
            <person name="Tanaka T."/>
            <person name="Ishii S."/>
            <person name="Yamamoto J."/>
            <person name="Saito K."/>
            <person name="Kawai Y."/>
            <person name="Isono Y."/>
            <person name="Nakamura Y."/>
            <person name="Nagahari K."/>
            <person name="Murakami K."/>
            <person name="Yasuda T."/>
            <person name="Iwayanagi T."/>
            <person name="Wagatsuma M."/>
            <person name="Shiratori A."/>
            <person name="Sudo H."/>
            <person name="Hosoiri T."/>
            <person name="Kaku Y."/>
            <person name="Kodaira H."/>
            <person name="Kondo H."/>
            <person name="Sugawara M."/>
            <person name="Takahashi M."/>
            <person name="Kanda K."/>
            <person name="Yokoi T."/>
            <person name="Furuya T."/>
            <person name="Kikkawa E."/>
            <person name="Omura Y."/>
            <person name="Abe K."/>
            <person name="Kamihara K."/>
            <person name="Katsuta N."/>
            <person name="Sato K."/>
            <person name="Tanikawa M."/>
            <person name="Yamazaki M."/>
            <person name="Ninomiya K."/>
            <person name="Ishibashi T."/>
            <person name="Yamashita H."/>
            <person name="Murakawa K."/>
            <person name="Fujimori K."/>
            <person name="Tanai H."/>
            <person name="Kimata M."/>
            <person name="Watanabe M."/>
            <person name="Hiraoka S."/>
            <person name="Chiba Y."/>
            <person name="Ishida S."/>
            <person name="Ono Y."/>
            <person name="Takiguchi S."/>
            <person name="Watanabe S."/>
            <person name="Yosida M."/>
            <person name="Hotuta T."/>
            <person name="Kusano J."/>
            <person name="Kanehori K."/>
            <person name="Takahashi-Fujii A."/>
            <person name="Hara H."/>
            <person name="Tanase T.-O."/>
            <person name="Nomura Y."/>
            <person name="Togiya S."/>
            <person name="Komai F."/>
            <person name="Hara R."/>
            <person name="Takeuchi K."/>
            <person name="Arita M."/>
            <person name="Imose N."/>
            <person name="Musashino K."/>
            <person name="Yuuki H."/>
            <person name="Oshima A."/>
            <person name="Sasaki N."/>
            <person name="Aotsuka S."/>
            <person name="Yoshikawa Y."/>
            <person name="Matsunawa H."/>
            <person name="Ichihara T."/>
            <person name="Shiohata N."/>
            <person name="Sano S."/>
            <person name="Moriya S."/>
            <person name="Momiyama H."/>
            <person name="Satoh N."/>
            <person name="Takami S."/>
            <person name="Terashima Y."/>
            <person name="Suzuki O."/>
            <person name="Nakagawa S."/>
            <person name="Senoh A."/>
            <person name="Mizoguchi H."/>
            <person name="Goto Y."/>
            <person name="Shimizu F."/>
            <person name="Wakebe H."/>
            <person name="Hishigaki H."/>
            <person name="Watanabe T."/>
            <person name="Sugiyama A."/>
            <person name="Takemoto M."/>
            <person name="Kawakami B."/>
            <person name="Yamazaki M."/>
            <person name="Watanabe K."/>
            <person name="Kumagai A."/>
            <person name="Itakura S."/>
            <person name="Fukuzumi Y."/>
            <person name="Fujimori Y."/>
            <person name="Komiyama M."/>
            <person name="Tashiro H."/>
            <person name="Tanigami A."/>
            <person name="Fujiwara T."/>
            <person name="Ono T."/>
            <person name="Yamada K."/>
            <person name="Fujii Y."/>
            <person name="Ozaki K."/>
            <person name="Hirao M."/>
            <person name="Ohmori Y."/>
            <person name="Kawabata A."/>
            <person name="Hikiji T."/>
            <person name="Kobatake N."/>
            <person name="Inagaki H."/>
            <person name="Ikema Y."/>
            <person name="Okamoto S."/>
            <person name="Okitani R."/>
            <person name="Kawakami T."/>
            <person name="Noguchi S."/>
            <person name="Itoh T."/>
            <person name="Shigeta K."/>
            <person name="Senba T."/>
            <person name="Matsumura K."/>
            <person name="Nakajima Y."/>
            <person name="Mizuno T."/>
            <person name="Morinaga M."/>
            <person name="Sasaki M."/>
            <person name="Togashi T."/>
            <person name="Oyama M."/>
            <person name="Hata H."/>
            <person name="Watanabe M."/>
            <person name="Komatsu T."/>
            <person name="Mizushima-Sugano J."/>
            <person name="Satoh T."/>
            <person name="Shirai Y."/>
            <person name="Takahashi Y."/>
            <person name="Nakagawa K."/>
            <person name="Okumura K."/>
            <person name="Nagase T."/>
            <person name="Nomura N."/>
            <person name="Kikuchi H."/>
            <person name="Masuho Y."/>
            <person name="Yamashita R."/>
            <person name="Nakai K."/>
            <person name="Yada T."/>
            <person name="Nakamura Y."/>
            <person name="Ohara O."/>
            <person name="Isogai T."/>
            <person name="Sugano S."/>
        </authorList>
    </citation>
    <scope>NUCLEOTIDE SEQUENCE [LARGE SCALE MRNA]</scope>
    <source>
        <tissue>Esophagus</tissue>
    </source>
</reference>
<reference key="3">
    <citation type="submission" date="2005-07" db="EMBL/GenBank/DDBJ databases">
        <authorList>
            <person name="Mural R.J."/>
            <person name="Istrail S."/>
            <person name="Sutton G.G."/>
            <person name="Florea L."/>
            <person name="Halpern A.L."/>
            <person name="Mobarry C.M."/>
            <person name="Lippert R."/>
            <person name="Walenz B."/>
            <person name="Shatkay H."/>
            <person name="Dew I."/>
            <person name="Miller J.R."/>
            <person name="Flanigan M.J."/>
            <person name="Edwards N.J."/>
            <person name="Bolanos R."/>
            <person name="Fasulo D."/>
            <person name="Halldorsson B.V."/>
            <person name="Hannenhalli S."/>
            <person name="Turner R."/>
            <person name="Yooseph S."/>
            <person name="Lu F."/>
            <person name="Nusskern D.R."/>
            <person name="Shue B.C."/>
            <person name="Zheng X.H."/>
            <person name="Zhong F."/>
            <person name="Delcher A.L."/>
            <person name="Huson D.H."/>
            <person name="Kravitz S.A."/>
            <person name="Mouchard L."/>
            <person name="Reinert K."/>
            <person name="Remington K.A."/>
            <person name="Clark A.G."/>
            <person name="Waterman M.S."/>
            <person name="Eichler E.E."/>
            <person name="Adams M.D."/>
            <person name="Hunkapiller M.W."/>
            <person name="Myers E.W."/>
            <person name="Venter J.C."/>
        </authorList>
    </citation>
    <scope>NUCLEOTIDE SEQUENCE [LARGE SCALE GENOMIC DNA]</scope>
</reference>
<reference key="4">
    <citation type="journal article" date="2004" name="Genome Res.">
        <title>The status, quality, and expansion of the NIH full-length cDNA project: the Mammalian Gene Collection (MGC).</title>
        <authorList>
            <consortium name="The MGC Project Team"/>
        </authorList>
    </citation>
    <scope>NUCLEOTIDE SEQUENCE [LARGE SCALE MRNA]</scope>
    <source>
        <tissue>Placenta</tissue>
    </source>
</reference>
<reference key="5">
    <citation type="journal article" date="2009" name="Chem. Biol. Interact.">
        <title>The SDR (short-chain dehydrogenase/reductase and related enzymes) nomenclature initiative.</title>
        <authorList>
            <person name="Persson B."/>
            <person name="Kallberg Y."/>
            <person name="Bray J.E."/>
            <person name="Bruford E."/>
            <person name="Dellaporta S.L."/>
            <person name="Favia A.D."/>
            <person name="Duarte R.G."/>
            <person name="Joernvall H."/>
            <person name="Kavanagh K.L."/>
            <person name="Kedishvili N."/>
            <person name="Kisiela M."/>
            <person name="Maser E."/>
            <person name="Mindnich R."/>
            <person name="Orchard S."/>
            <person name="Penning T.M."/>
            <person name="Thornton J.M."/>
            <person name="Adamski J."/>
            <person name="Oppermann U."/>
        </authorList>
    </citation>
    <scope>NOMENCLATURE</scope>
</reference>
<reference key="6">
    <citation type="journal article" date="2009" name="J. Steroid Biochem. Mol. Biol.">
        <title>In search for function of two human orphan SDR enzymes: Hydroxysteroid dehydrogenase like 2 (HSDL2) and short-chain dehydrogenase/reductase-orphan (SDR-O).</title>
        <authorList>
            <person name="Kowalik D."/>
            <person name="Haller F."/>
            <person name="Adamski J."/>
            <person name="Moeller G."/>
        </authorList>
    </citation>
    <scope>FUNCTION</scope>
    <scope>SUBCELLULAR LOCATION</scope>
</reference>
<reference key="7">
    <citation type="journal article" date="2014" name="J. Proteomics">
        <title>An enzyme assisted RP-RPLC approach for in-depth analysis of human liver phosphoproteome.</title>
        <authorList>
            <person name="Bian Y."/>
            <person name="Song C."/>
            <person name="Cheng K."/>
            <person name="Dong M."/>
            <person name="Wang F."/>
            <person name="Huang J."/>
            <person name="Sun D."/>
            <person name="Wang L."/>
            <person name="Ye M."/>
            <person name="Zou H."/>
        </authorList>
    </citation>
    <scope>PHOSPHORYLATION [LARGE SCALE ANALYSIS] AT SER-185</scope>
    <scope>IDENTIFICATION BY MASS SPECTROMETRY [LARGE SCALE ANALYSIS]</scope>
    <source>
        <tissue>Liver</tissue>
    </source>
</reference>
<reference key="8">
    <citation type="journal article" date="2020" name="J. Clin. Invest.">
        <title>SDR9C7 catalyzes critical dehydrogenation of acylceramides for skin barrier formation.</title>
        <authorList>
            <person name="Takeichi T."/>
            <person name="Hirabayashi T."/>
            <person name="Miyasaka Y."/>
            <person name="Kawamoto A."/>
            <person name="Okuno Y."/>
            <person name="Taguchi S."/>
            <person name="Tanahashi K."/>
            <person name="Murase C."/>
            <person name="Takama H."/>
            <person name="Tanaka K."/>
            <person name="Boeglin W.E."/>
            <person name="Calcutt M.W."/>
            <person name="Watanabe D."/>
            <person name="Kono M."/>
            <person name="Muro Y."/>
            <person name="Ishikawa J."/>
            <person name="Ohno T."/>
            <person name="Brash A.R."/>
            <person name="Akiyama M."/>
        </authorList>
    </citation>
    <scope>FUNCTION</scope>
    <scope>CATALYTIC ACTIVITY</scope>
</reference>
<reference key="9">
    <citation type="journal article" date="2016" name="Hum. Mol. Genet.">
        <title>Mutations in SDR9C7 gene encoding an enzyme for vitamin A metabolism underlie autosomal recessive congenital ichthyosis.</title>
        <authorList>
            <person name="Shigehara Y."/>
            <person name="Okuda S."/>
            <person name="Nemer G."/>
            <person name="Chedraoui A."/>
            <person name="Hayashi R."/>
            <person name="Bitar F."/>
            <person name="Nakai H."/>
            <person name="Abbas O."/>
            <person name="Daou L."/>
            <person name="Abe R."/>
            <person name="Sleiman M.B."/>
            <person name="Kibbi A.G."/>
            <person name="Kurban M."/>
            <person name="Shimomura Y."/>
        </authorList>
    </citation>
    <scope>VARIANTS ARCI13 TRP-72 AND THR-200</scope>
    <scope>CHARACTERIZATION OF VARIANTS ARCI13 TRP-72 AND THR-200</scope>
    <scope>INVOLVEMENT IN ARCI13</scope>
    <scope>TISSUE SPECIFICITY</scope>
</reference>
<protein>
    <recommendedName>
        <fullName>Short-chain dehydrogenase/reductase family 9C member 7</fullName>
        <shortName evidence="7">SDR9C7</shortName>
        <ecNumber>1.1.1.-</ecNumber>
    </recommendedName>
    <alternativeName>
        <fullName>O-acylceramide dehydrogenase</fullName>
    </alternativeName>
    <alternativeName>
        <fullName>Orphan short-chain dehydrogenase/reductase</fullName>
        <shortName>SDR-O</shortName>
    </alternativeName>
    <alternativeName>
        <fullName>RDH-S</fullName>
    </alternativeName>
</protein>
<dbReference type="EC" id="1.1.1.-"/>
<dbReference type="EMBL" id="AY044434">
    <property type="protein sequence ID" value="AAK95856.1"/>
    <property type="molecule type" value="mRNA"/>
</dbReference>
<dbReference type="EMBL" id="AK122782">
    <property type="protein sequence ID" value="BAG53726.1"/>
    <property type="molecule type" value="mRNA"/>
</dbReference>
<dbReference type="EMBL" id="CH471054">
    <property type="protein sequence ID" value="EAW96967.1"/>
    <property type="molecule type" value="Genomic_DNA"/>
</dbReference>
<dbReference type="EMBL" id="BC101551">
    <property type="protein sequence ID" value="AAI01552.1"/>
    <property type="molecule type" value="mRNA"/>
</dbReference>
<dbReference type="EMBL" id="BC101553">
    <property type="protein sequence ID" value="AAI01554.1"/>
    <property type="molecule type" value="mRNA"/>
</dbReference>
<dbReference type="CCDS" id="CCDS8926.1"/>
<dbReference type="RefSeq" id="NP_683695.1">
    <property type="nucleotide sequence ID" value="NM_148897.3"/>
</dbReference>
<dbReference type="SMR" id="Q8NEX9"/>
<dbReference type="BioGRID" id="125711">
    <property type="interactions" value="147"/>
</dbReference>
<dbReference type="FunCoup" id="Q8NEX9">
    <property type="interactions" value="224"/>
</dbReference>
<dbReference type="IntAct" id="Q8NEX9">
    <property type="interactions" value="76"/>
</dbReference>
<dbReference type="MINT" id="Q8NEX9"/>
<dbReference type="STRING" id="9606.ENSP00000293502"/>
<dbReference type="GlyGen" id="Q8NEX9">
    <property type="glycosylation" value="1 site, 16 N-linked glycans (1 site)"/>
</dbReference>
<dbReference type="iPTMnet" id="Q8NEX9"/>
<dbReference type="PhosphoSitePlus" id="Q8NEX9"/>
<dbReference type="BioMuta" id="SDR9C7"/>
<dbReference type="DMDM" id="74751264"/>
<dbReference type="jPOST" id="Q8NEX9"/>
<dbReference type="MassIVE" id="Q8NEX9"/>
<dbReference type="PaxDb" id="9606-ENSP00000293502"/>
<dbReference type="PeptideAtlas" id="Q8NEX9"/>
<dbReference type="ProteomicsDB" id="73229"/>
<dbReference type="Pumba" id="Q8NEX9"/>
<dbReference type="Antibodypedia" id="43915">
    <property type="antibodies" value="235 antibodies from 15 providers"/>
</dbReference>
<dbReference type="DNASU" id="121214"/>
<dbReference type="Ensembl" id="ENST00000293502.2">
    <property type="protein sequence ID" value="ENSP00000293502.1"/>
    <property type="gene ID" value="ENSG00000170426.2"/>
</dbReference>
<dbReference type="GeneID" id="121214"/>
<dbReference type="KEGG" id="hsa:121214"/>
<dbReference type="MANE-Select" id="ENST00000293502.2">
    <property type="protein sequence ID" value="ENSP00000293502.1"/>
    <property type="RefSeq nucleotide sequence ID" value="NM_148897.3"/>
    <property type="RefSeq protein sequence ID" value="NP_683695.1"/>
</dbReference>
<dbReference type="UCSC" id="uc010sqw.2">
    <property type="organism name" value="human"/>
</dbReference>
<dbReference type="AGR" id="HGNC:29958"/>
<dbReference type="CTD" id="121214"/>
<dbReference type="DisGeNET" id="121214"/>
<dbReference type="GeneCards" id="SDR9C7"/>
<dbReference type="GeneReviews" id="SDR9C7"/>
<dbReference type="HGNC" id="HGNC:29958">
    <property type="gene designation" value="SDR9C7"/>
</dbReference>
<dbReference type="HPA" id="ENSG00000170426">
    <property type="expression patterns" value="Tissue enhanced (esophagus, skin, vagina)"/>
</dbReference>
<dbReference type="MalaCards" id="SDR9C7"/>
<dbReference type="MIM" id="609769">
    <property type="type" value="gene"/>
</dbReference>
<dbReference type="MIM" id="617574">
    <property type="type" value="phenotype"/>
</dbReference>
<dbReference type="neXtProt" id="NX_Q8NEX9"/>
<dbReference type="OpenTargets" id="ENSG00000170426"/>
<dbReference type="Orphanet" id="79394">
    <property type="disease" value="Congenital ichthyosiform erythroderma"/>
</dbReference>
<dbReference type="Orphanet" id="313">
    <property type="disease" value="Lamellar ichthyosis"/>
</dbReference>
<dbReference type="PharmGKB" id="PA164725648"/>
<dbReference type="VEuPathDB" id="HostDB:ENSG00000170426"/>
<dbReference type="eggNOG" id="KOG1610">
    <property type="taxonomic scope" value="Eukaryota"/>
</dbReference>
<dbReference type="GeneTree" id="ENSGT00940000161764"/>
<dbReference type="HOGENOM" id="CLU_010194_2_0_1"/>
<dbReference type="InParanoid" id="Q8NEX9"/>
<dbReference type="OMA" id="GFMYRWF"/>
<dbReference type="OrthoDB" id="5296at2759"/>
<dbReference type="PAN-GO" id="Q8NEX9">
    <property type="GO annotations" value="5 GO annotations based on evolutionary models"/>
</dbReference>
<dbReference type="PhylomeDB" id="Q8NEX9"/>
<dbReference type="TreeFam" id="TF325617"/>
<dbReference type="PathwayCommons" id="Q8NEX9"/>
<dbReference type="Reactome" id="R-HSA-2453902">
    <property type="pathway name" value="The canonical retinoid cycle in rods (twilight vision)"/>
</dbReference>
<dbReference type="SignaLink" id="Q8NEX9"/>
<dbReference type="BioGRID-ORCS" id="121214">
    <property type="hits" value="8 hits in 1151 CRISPR screens"/>
</dbReference>
<dbReference type="GenomeRNAi" id="121214"/>
<dbReference type="Pharos" id="Q8NEX9">
    <property type="development level" value="Tbio"/>
</dbReference>
<dbReference type="PRO" id="PR:Q8NEX9"/>
<dbReference type="Proteomes" id="UP000005640">
    <property type="component" value="Chromosome 12"/>
</dbReference>
<dbReference type="RNAct" id="Q8NEX9">
    <property type="molecule type" value="protein"/>
</dbReference>
<dbReference type="Bgee" id="ENSG00000170426">
    <property type="expression patterns" value="Expressed in skin of leg and 75 other cell types or tissues"/>
</dbReference>
<dbReference type="GO" id="GO:0005737">
    <property type="term" value="C:cytoplasm"/>
    <property type="evidence" value="ECO:0007669"/>
    <property type="project" value="UniProtKB-SubCell"/>
</dbReference>
<dbReference type="GO" id="GO:0043231">
    <property type="term" value="C:intracellular membrane-bounded organelle"/>
    <property type="evidence" value="ECO:0000318"/>
    <property type="project" value="GO_Central"/>
</dbReference>
<dbReference type="GO" id="GO:0004745">
    <property type="term" value="F:all-trans-retinol dehydrogenase (NAD+) activity"/>
    <property type="evidence" value="ECO:0000314"/>
    <property type="project" value="UniProtKB"/>
</dbReference>
<dbReference type="GO" id="GO:0042572">
    <property type="term" value="P:retinol metabolic process"/>
    <property type="evidence" value="ECO:0000318"/>
    <property type="project" value="GO_Central"/>
</dbReference>
<dbReference type="GO" id="GO:0008202">
    <property type="term" value="P:steroid metabolic process"/>
    <property type="evidence" value="ECO:0000318"/>
    <property type="project" value="GO_Central"/>
</dbReference>
<dbReference type="CDD" id="cd09805">
    <property type="entry name" value="type2_17beta_HSD-like_SDR_c"/>
    <property type="match status" value="1"/>
</dbReference>
<dbReference type="FunFam" id="3.40.50.720:FF:000074">
    <property type="entry name" value="Retinol dehydrogenase type 1"/>
    <property type="match status" value="1"/>
</dbReference>
<dbReference type="Gene3D" id="3.40.50.720">
    <property type="entry name" value="NAD(P)-binding Rossmann-like Domain"/>
    <property type="match status" value="1"/>
</dbReference>
<dbReference type="InterPro" id="IPR036291">
    <property type="entry name" value="NAD(P)-bd_dom_sf"/>
</dbReference>
<dbReference type="InterPro" id="IPR020904">
    <property type="entry name" value="Sc_DH/Rdtase_CS"/>
</dbReference>
<dbReference type="InterPro" id="IPR002347">
    <property type="entry name" value="SDR_fam"/>
</dbReference>
<dbReference type="PANTHER" id="PTHR43313">
    <property type="entry name" value="SHORT-CHAIN DEHYDROGENASE/REDUCTASE FAMILY 9C"/>
    <property type="match status" value="1"/>
</dbReference>
<dbReference type="PANTHER" id="PTHR43313:SF5">
    <property type="entry name" value="SHORT-CHAIN DEHYDROGENASE_REDUCTASE FAMILY 9C MEMBER 7"/>
    <property type="match status" value="1"/>
</dbReference>
<dbReference type="Pfam" id="PF00106">
    <property type="entry name" value="adh_short"/>
    <property type="match status" value="1"/>
</dbReference>
<dbReference type="PRINTS" id="PR00081">
    <property type="entry name" value="GDHRDH"/>
</dbReference>
<dbReference type="PRINTS" id="PR00080">
    <property type="entry name" value="SDRFAMILY"/>
</dbReference>
<dbReference type="SUPFAM" id="SSF51735">
    <property type="entry name" value="NAD(P)-binding Rossmann-fold domains"/>
    <property type="match status" value="1"/>
</dbReference>
<dbReference type="PROSITE" id="PS00061">
    <property type="entry name" value="ADH_SHORT"/>
    <property type="match status" value="1"/>
</dbReference>
<feature type="chain" id="PRO_0000316885" description="Short-chain dehydrogenase/reductase family 9C member 7">
    <location>
        <begin position="1"/>
        <end position="313"/>
    </location>
</feature>
<feature type="active site" description="Proton acceptor" evidence="2">
    <location>
        <position position="172"/>
    </location>
</feature>
<feature type="binding site" evidence="1">
    <location>
        <begin position="29"/>
        <end position="53"/>
    </location>
    <ligand>
        <name>NADP(+)</name>
        <dbReference type="ChEBI" id="CHEBI:58349"/>
    </ligand>
</feature>
<feature type="binding site" evidence="1">
    <location>
        <position position="160"/>
    </location>
    <ligand>
        <name>substrate</name>
    </ligand>
</feature>
<feature type="modified residue" description="Phosphoserine" evidence="10">
    <location>
        <position position="185"/>
    </location>
</feature>
<feature type="sequence variant" id="VAR_079292" description="In ARCI13; decreased protein abundance; dbSNP:rs530109812." evidence="5">
    <original>R</original>
    <variation>W</variation>
    <location>
        <position position="72"/>
    </location>
</feature>
<feature type="sequence variant" id="VAR_079293" description="In ARCI13; decreased protein abundance; dbSNP:rs770729222." evidence="5">
    <original>I</original>
    <variation>T</variation>
    <location>
        <position position="200"/>
    </location>
</feature>
<proteinExistence type="evidence at protein level"/>
<gene>
    <name type="primary">SDR9C7</name>
    <name type="synonym">RDHS</name>
    <name type="synonym">SDRO</name>
</gene>